<reference key="1">
    <citation type="journal article" date="2003" name="J. Bacteriol.">
        <title>Complete genome sequence of the ammonia-oxidizing bacterium and obligate chemolithoautotroph Nitrosomonas europaea.</title>
        <authorList>
            <person name="Chain P."/>
            <person name="Lamerdin J.E."/>
            <person name="Larimer F.W."/>
            <person name="Regala W."/>
            <person name="Lao V."/>
            <person name="Land M.L."/>
            <person name="Hauser L."/>
            <person name="Hooper A.B."/>
            <person name="Klotz M.G."/>
            <person name="Norton J."/>
            <person name="Sayavedra-Soto L.A."/>
            <person name="Arciero D.M."/>
            <person name="Hommes N.G."/>
            <person name="Whittaker M.M."/>
            <person name="Arp D.J."/>
        </authorList>
    </citation>
    <scope>NUCLEOTIDE SEQUENCE [LARGE SCALE GENOMIC DNA]</scope>
    <source>
        <strain>ATCC 19718 / CIP 103999 / KCTC 2705 / NBRC 14298</strain>
    </source>
</reference>
<accession>Q82VD3</accession>
<name>DXS_NITEU</name>
<protein>
    <recommendedName>
        <fullName evidence="1">1-deoxy-D-xylulose-5-phosphate synthase</fullName>
        <ecNumber evidence="1">2.2.1.7</ecNumber>
    </recommendedName>
    <alternativeName>
        <fullName evidence="1">1-deoxyxylulose-5-phosphate synthase</fullName>
        <shortName evidence="1">DXP synthase</shortName>
        <shortName evidence="1">DXPS</shortName>
    </alternativeName>
</protein>
<proteinExistence type="inferred from homology"/>
<comment type="function">
    <text evidence="1">Catalyzes the acyloin condensation reaction between C atoms 2 and 3 of pyruvate and glyceraldehyde 3-phosphate to yield 1-deoxy-D-xylulose-5-phosphate (DXP).</text>
</comment>
<comment type="catalytic activity">
    <reaction evidence="1">
        <text>D-glyceraldehyde 3-phosphate + pyruvate + H(+) = 1-deoxy-D-xylulose 5-phosphate + CO2</text>
        <dbReference type="Rhea" id="RHEA:12605"/>
        <dbReference type="ChEBI" id="CHEBI:15361"/>
        <dbReference type="ChEBI" id="CHEBI:15378"/>
        <dbReference type="ChEBI" id="CHEBI:16526"/>
        <dbReference type="ChEBI" id="CHEBI:57792"/>
        <dbReference type="ChEBI" id="CHEBI:59776"/>
        <dbReference type="EC" id="2.2.1.7"/>
    </reaction>
</comment>
<comment type="cofactor">
    <cofactor evidence="1">
        <name>Mg(2+)</name>
        <dbReference type="ChEBI" id="CHEBI:18420"/>
    </cofactor>
    <text evidence="1">Binds 1 Mg(2+) ion per subunit.</text>
</comment>
<comment type="cofactor">
    <cofactor evidence="1">
        <name>thiamine diphosphate</name>
        <dbReference type="ChEBI" id="CHEBI:58937"/>
    </cofactor>
    <text evidence="1">Binds 1 thiamine pyrophosphate per subunit.</text>
</comment>
<comment type="pathway">
    <text evidence="1">Metabolic intermediate biosynthesis; 1-deoxy-D-xylulose 5-phosphate biosynthesis; 1-deoxy-D-xylulose 5-phosphate from D-glyceraldehyde 3-phosphate and pyruvate: step 1/1.</text>
</comment>
<comment type="subunit">
    <text evidence="1">Homodimer.</text>
</comment>
<comment type="similarity">
    <text evidence="1">Belongs to the transketolase family. DXPS subfamily.</text>
</comment>
<evidence type="ECO:0000255" key="1">
    <source>
        <dbReference type="HAMAP-Rule" id="MF_00315"/>
    </source>
</evidence>
<keyword id="KW-0414">Isoprene biosynthesis</keyword>
<keyword id="KW-0460">Magnesium</keyword>
<keyword id="KW-0479">Metal-binding</keyword>
<keyword id="KW-1185">Reference proteome</keyword>
<keyword id="KW-0784">Thiamine biosynthesis</keyword>
<keyword id="KW-0786">Thiamine pyrophosphate</keyword>
<keyword id="KW-0808">Transferase</keyword>
<dbReference type="EC" id="2.2.1.7" evidence="1"/>
<dbReference type="EMBL" id="AL954747">
    <property type="protein sequence ID" value="CAD85072.1"/>
    <property type="molecule type" value="Genomic_DNA"/>
</dbReference>
<dbReference type="RefSeq" id="WP_011111752.1">
    <property type="nucleotide sequence ID" value="NC_004757.1"/>
</dbReference>
<dbReference type="SMR" id="Q82VD3"/>
<dbReference type="STRING" id="228410.NE1161"/>
<dbReference type="GeneID" id="87104341"/>
<dbReference type="KEGG" id="neu:NE1161"/>
<dbReference type="eggNOG" id="COG1154">
    <property type="taxonomic scope" value="Bacteria"/>
</dbReference>
<dbReference type="HOGENOM" id="CLU_009227_1_4_4"/>
<dbReference type="OrthoDB" id="9803371at2"/>
<dbReference type="PhylomeDB" id="Q82VD3"/>
<dbReference type="UniPathway" id="UPA00064">
    <property type="reaction ID" value="UER00091"/>
</dbReference>
<dbReference type="Proteomes" id="UP000001416">
    <property type="component" value="Chromosome"/>
</dbReference>
<dbReference type="GO" id="GO:0005829">
    <property type="term" value="C:cytosol"/>
    <property type="evidence" value="ECO:0007669"/>
    <property type="project" value="TreeGrafter"/>
</dbReference>
<dbReference type="GO" id="GO:0008661">
    <property type="term" value="F:1-deoxy-D-xylulose-5-phosphate synthase activity"/>
    <property type="evidence" value="ECO:0007669"/>
    <property type="project" value="UniProtKB-UniRule"/>
</dbReference>
<dbReference type="GO" id="GO:0000287">
    <property type="term" value="F:magnesium ion binding"/>
    <property type="evidence" value="ECO:0007669"/>
    <property type="project" value="UniProtKB-UniRule"/>
</dbReference>
<dbReference type="GO" id="GO:0030976">
    <property type="term" value="F:thiamine pyrophosphate binding"/>
    <property type="evidence" value="ECO:0007669"/>
    <property type="project" value="UniProtKB-UniRule"/>
</dbReference>
<dbReference type="GO" id="GO:0052865">
    <property type="term" value="P:1-deoxy-D-xylulose 5-phosphate biosynthetic process"/>
    <property type="evidence" value="ECO:0007669"/>
    <property type="project" value="UniProtKB-UniPathway"/>
</dbReference>
<dbReference type="GO" id="GO:0019288">
    <property type="term" value="P:isopentenyl diphosphate biosynthetic process, methylerythritol 4-phosphate pathway"/>
    <property type="evidence" value="ECO:0007669"/>
    <property type="project" value="TreeGrafter"/>
</dbReference>
<dbReference type="GO" id="GO:0016114">
    <property type="term" value="P:terpenoid biosynthetic process"/>
    <property type="evidence" value="ECO:0007669"/>
    <property type="project" value="UniProtKB-UniRule"/>
</dbReference>
<dbReference type="GO" id="GO:0009228">
    <property type="term" value="P:thiamine biosynthetic process"/>
    <property type="evidence" value="ECO:0007669"/>
    <property type="project" value="UniProtKB-UniRule"/>
</dbReference>
<dbReference type="CDD" id="cd02007">
    <property type="entry name" value="TPP_DXS"/>
    <property type="match status" value="1"/>
</dbReference>
<dbReference type="CDD" id="cd07033">
    <property type="entry name" value="TPP_PYR_DXS_TK_like"/>
    <property type="match status" value="1"/>
</dbReference>
<dbReference type="FunFam" id="3.40.50.920:FF:000002">
    <property type="entry name" value="1-deoxy-D-xylulose-5-phosphate synthase"/>
    <property type="match status" value="1"/>
</dbReference>
<dbReference type="FunFam" id="3.40.50.970:FF:000005">
    <property type="entry name" value="1-deoxy-D-xylulose-5-phosphate synthase"/>
    <property type="match status" value="1"/>
</dbReference>
<dbReference type="Gene3D" id="3.40.50.920">
    <property type="match status" value="1"/>
</dbReference>
<dbReference type="Gene3D" id="3.40.50.970">
    <property type="match status" value="2"/>
</dbReference>
<dbReference type="HAMAP" id="MF_00315">
    <property type="entry name" value="DXP_synth"/>
    <property type="match status" value="1"/>
</dbReference>
<dbReference type="InterPro" id="IPR005477">
    <property type="entry name" value="Dxylulose-5-P_synthase"/>
</dbReference>
<dbReference type="InterPro" id="IPR029061">
    <property type="entry name" value="THDP-binding"/>
</dbReference>
<dbReference type="InterPro" id="IPR009014">
    <property type="entry name" value="Transketo_C/PFOR_II"/>
</dbReference>
<dbReference type="InterPro" id="IPR005475">
    <property type="entry name" value="Transketolase-like_Pyr-bd"/>
</dbReference>
<dbReference type="InterPro" id="IPR020826">
    <property type="entry name" value="Transketolase_BS"/>
</dbReference>
<dbReference type="InterPro" id="IPR033248">
    <property type="entry name" value="Transketolase_C"/>
</dbReference>
<dbReference type="InterPro" id="IPR049557">
    <property type="entry name" value="Transketolase_CS"/>
</dbReference>
<dbReference type="NCBIfam" id="TIGR00204">
    <property type="entry name" value="dxs"/>
    <property type="match status" value="1"/>
</dbReference>
<dbReference type="NCBIfam" id="NF003933">
    <property type="entry name" value="PRK05444.2-2"/>
    <property type="match status" value="1"/>
</dbReference>
<dbReference type="PANTHER" id="PTHR43322">
    <property type="entry name" value="1-D-DEOXYXYLULOSE 5-PHOSPHATE SYNTHASE-RELATED"/>
    <property type="match status" value="1"/>
</dbReference>
<dbReference type="PANTHER" id="PTHR43322:SF5">
    <property type="entry name" value="1-DEOXY-D-XYLULOSE-5-PHOSPHATE SYNTHASE, CHLOROPLASTIC"/>
    <property type="match status" value="1"/>
</dbReference>
<dbReference type="Pfam" id="PF13292">
    <property type="entry name" value="DXP_synthase_N"/>
    <property type="match status" value="1"/>
</dbReference>
<dbReference type="Pfam" id="PF02779">
    <property type="entry name" value="Transket_pyr"/>
    <property type="match status" value="1"/>
</dbReference>
<dbReference type="Pfam" id="PF02780">
    <property type="entry name" value="Transketolase_C"/>
    <property type="match status" value="1"/>
</dbReference>
<dbReference type="SMART" id="SM00861">
    <property type="entry name" value="Transket_pyr"/>
    <property type="match status" value="1"/>
</dbReference>
<dbReference type="SUPFAM" id="SSF52518">
    <property type="entry name" value="Thiamin diphosphate-binding fold (THDP-binding)"/>
    <property type="match status" value="2"/>
</dbReference>
<dbReference type="SUPFAM" id="SSF52922">
    <property type="entry name" value="TK C-terminal domain-like"/>
    <property type="match status" value="1"/>
</dbReference>
<dbReference type="PROSITE" id="PS00801">
    <property type="entry name" value="TRANSKETOLASE_1"/>
    <property type="match status" value="1"/>
</dbReference>
<dbReference type="PROSITE" id="PS00802">
    <property type="entry name" value="TRANSKETOLASE_2"/>
    <property type="match status" value="1"/>
</dbReference>
<feature type="chain" id="PRO_0000189135" description="1-deoxy-D-xylulose-5-phosphate synthase">
    <location>
        <begin position="1"/>
        <end position="614"/>
    </location>
</feature>
<feature type="binding site" evidence="1">
    <location>
        <position position="74"/>
    </location>
    <ligand>
        <name>thiamine diphosphate</name>
        <dbReference type="ChEBI" id="CHEBI:58937"/>
    </ligand>
</feature>
<feature type="binding site" evidence="1">
    <location>
        <begin position="115"/>
        <end position="117"/>
    </location>
    <ligand>
        <name>thiamine diphosphate</name>
        <dbReference type="ChEBI" id="CHEBI:58937"/>
    </ligand>
</feature>
<feature type="binding site" evidence="1">
    <location>
        <position position="146"/>
    </location>
    <ligand>
        <name>Mg(2+)</name>
        <dbReference type="ChEBI" id="CHEBI:18420"/>
    </ligand>
</feature>
<feature type="binding site" evidence="1">
    <location>
        <begin position="147"/>
        <end position="148"/>
    </location>
    <ligand>
        <name>thiamine diphosphate</name>
        <dbReference type="ChEBI" id="CHEBI:58937"/>
    </ligand>
</feature>
<feature type="binding site" evidence="1">
    <location>
        <position position="175"/>
    </location>
    <ligand>
        <name>Mg(2+)</name>
        <dbReference type="ChEBI" id="CHEBI:18420"/>
    </ligand>
</feature>
<feature type="binding site" evidence="1">
    <location>
        <position position="175"/>
    </location>
    <ligand>
        <name>thiamine diphosphate</name>
        <dbReference type="ChEBI" id="CHEBI:58937"/>
    </ligand>
</feature>
<feature type="binding site" evidence="1">
    <location>
        <position position="282"/>
    </location>
    <ligand>
        <name>thiamine diphosphate</name>
        <dbReference type="ChEBI" id="CHEBI:58937"/>
    </ligand>
</feature>
<feature type="binding site" evidence="1">
    <location>
        <position position="363"/>
    </location>
    <ligand>
        <name>thiamine diphosphate</name>
        <dbReference type="ChEBI" id="CHEBI:58937"/>
    </ligand>
</feature>
<sequence>MYPLLDRIEIPAQLRTLKRNQLPQLADELRNFLVESVAGTGGHLSSNLGTVELTIALHYVFDTPFDRLIWDVGHQTYAHKILTGRRTGMARLRMQGGIAGFPRRDESEYDAFGTAHSSTSISAALGMAVAARLKGVKQHAIAVIGDGAMSAGMAFEALNNAGVMDANLLVILNDNDMSISPPVGALNNYLAKLMSGRFYATARRAGEKMLGVVPPVLELAKRAEEHVKGMVTPSTLFEEFGFNYIGPIDGHDLDILLTTLNNIKQLDGPQFLHVVTRKGKGYKQAEEDPILYHGVGKFQPDQGIVSKPSAKLAYTQIFGDWLCDMAAKDSRLIGITPAMREGSGLVRFSKEYPDRYFDVGIAEQHAVTFAAGAACEGLKPVVAIYSTFLQRAYDQLIHDVAIQNLPVVFAIDRAGLVGADGPTHAGSFDLSYLRCIPNITVMTPADENECRQMLYTAFQLDTPAAVRYPRGSGPGVQIQQEMQTIPLGKGEIRRQGKQIALLAFGSMLTPCLEAGDELDATVVNMRFVKPLDQELVATLAAEHELLVTIEENTIMGGAGSAVMESLSSLDKNVRLLQLGLPDSFIDQGDPAHMLSDCGLDKAGIIQSIKERFSL</sequence>
<gene>
    <name evidence="1" type="primary">dxs</name>
    <name type="ordered locus">NE1161</name>
</gene>
<organism>
    <name type="scientific">Nitrosomonas europaea (strain ATCC 19718 / CIP 103999 / KCTC 2705 / NBRC 14298)</name>
    <dbReference type="NCBI Taxonomy" id="228410"/>
    <lineage>
        <taxon>Bacteria</taxon>
        <taxon>Pseudomonadati</taxon>
        <taxon>Pseudomonadota</taxon>
        <taxon>Betaproteobacteria</taxon>
        <taxon>Nitrosomonadales</taxon>
        <taxon>Nitrosomonadaceae</taxon>
        <taxon>Nitrosomonas</taxon>
    </lineage>
</organism>